<protein>
    <recommendedName>
        <fullName evidence="1">Photosystem II reaction center protein J</fullName>
        <shortName evidence="1">PSII-J</shortName>
    </recommendedName>
</protein>
<organism>
    <name type="scientific">Mesostigma viride</name>
    <name type="common">Green alga</name>
    <dbReference type="NCBI Taxonomy" id="41882"/>
    <lineage>
        <taxon>Eukaryota</taxon>
        <taxon>Viridiplantae</taxon>
        <taxon>Streptophyta</taxon>
        <taxon>Mesostigmatophyceae</taxon>
        <taxon>Mesostigmatales</taxon>
        <taxon>Mesostigmataceae</taxon>
        <taxon>Mesostigma</taxon>
    </lineage>
</organism>
<sequence>MSNTGTTGRIPLWLVGTVVGLLAIGLLALFFYGSYSGLGSSL</sequence>
<keyword id="KW-0150">Chloroplast</keyword>
<keyword id="KW-0472">Membrane</keyword>
<keyword id="KW-0602">Photosynthesis</keyword>
<keyword id="KW-0604">Photosystem II</keyword>
<keyword id="KW-0934">Plastid</keyword>
<keyword id="KW-0674">Reaction center</keyword>
<keyword id="KW-0793">Thylakoid</keyword>
<keyword id="KW-0812">Transmembrane</keyword>
<keyword id="KW-1133">Transmembrane helix</keyword>
<accession>Q9MUQ3</accession>
<name>PSBJ_MESVI</name>
<feature type="chain" id="PRO_0000216601" description="Photosystem II reaction center protein J">
    <location>
        <begin position="1"/>
        <end position="42"/>
    </location>
</feature>
<feature type="transmembrane region" description="Helical" evidence="1">
    <location>
        <begin position="10"/>
        <end position="30"/>
    </location>
</feature>
<evidence type="ECO:0000255" key="1">
    <source>
        <dbReference type="HAMAP-Rule" id="MF_01305"/>
    </source>
</evidence>
<reference key="1">
    <citation type="journal article" date="2000" name="Nature">
        <title>Ancestral chloroplast genome in Mesostigma viride reveals an early branch of green plant evolution.</title>
        <authorList>
            <person name="Lemieux C."/>
            <person name="Otis C."/>
            <person name="Turmel M."/>
        </authorList>
    </citation>
    <scope>NUCLEOTIDE SEQUENCE [LARGE SCALE GENOMIC DNA]</scope>
    <source>
        <strain>NIES-296 / KY-14 / CCMP 2046</strain>
    </source>
</reference>
<dbReference type="EMBL" id="AF166114">
    <property type="protein sequence ID" value="AAF43847.1"/>
    <property type="molecule type" value="Genomic_DNA"/>
</dbReference>
<dbReference type="RefSeq" id="NP_038407.1">
    <property type="nucleotide sequence ID" value="NC_002186.1"/>
</dbReference>
<dbReference type="SMR" id="Q9MUQ3"/>
<dbReference type="GeneID" id="800868"/>
<dbReference type="GO" id="GO:0009535">
    <property type="term" value="C:chloroplast thylakoid membrane"/>
    <property type="evidence" value="ECO:0007669"/>
    <property type="project" value="UniProtKB-SubCell"/>
</dbReference>
<dbReference type="GO" id="GO:0009539">
    <property type="term" value="C:photosystem II reaction center"/>
    <property type="evidence" value="ECO:0007669"/>
    <property type="project" value="InterPro"/>
</dbReference>
<dbReference type="GO" id="GO:0015979">
    <property type="term" value="P:photosynthesis"/>
    <property type="evidence" value="ECO:0007669"/>
    <property type="project" value="UniProtKB-UniRule"/>
</dbReference>
<dbReference type="Gene3D" id="6.10.250.2070">
    <property type="match status" value="1"/>
</dbReference>
<dbReference type="HAMAP" id="MF_01305">
    <property type="entry name" value="PSII_PsbJ"/>
    <property type="match status" value="1"/>
</dbReference>
<dbReference type="InterPro" id="IPR002682">
    <property type="entry name" value="PSII_PsbJ"/>
</dbReference>
<dbReference type="InterPro" id="IPR037267">
    <property type="entry name" value="PSII_PsbJ_sf"/>
</dbReference>
<dbReference type="NCBIfam" id="NF002722">
    <property type="entry name" value="PRK02565.1"/>
    <property type="match status" value="1"/>
</dbReference>
<dbReference type="PANTHER" id="PTHR34812">
    <property type="entry name" value="PHOTOSYSTEM II REACTION CENTER PROTEIN J"/>
    <property type="match status" value="1"/>
</dbReference>
<dbReference type="PANTHER" id="PTHR34812:SF3">
    <property type="entry name" value="PHOTOSYSTEM II REACTION CENTER PROTEIN J"/>
    <property type="match status" value="1"/>
</dbReference>
<dbReference type="Pfam" id="PF01788">
    <property type="entry name" value="PsbJ"/>
    <property type="match status" value="1"/>
</dbReference>
<dbReference type="SUPFAM" id="SSF161021">
    <property type="entry name" value="Photosystem II reaction center protein J, PsbJ"/>
    <property type="match status" value="1"/>
</dbReference>
<proteinExistence type="inferred from homology"/>
<gene>
    <name evidence="1" type="primary">psbJ</name>
</gene>
<geneLocation type="chloroplast"/>
<comment type="function">
    <text evidence="1">One of the components of the core complex of photosystem II (PSII). PSII is a light-driven water:plastoquinone oxidoreductase that uses light energy to abstract electrons from H(2)O, generating O(2) and a proton gradient subsequently used for ATP formation. It consists of a core antenna complex that captures photons, and an electron transfer chain that converts photonic excitation into a charge separation.</text>
</comment>
<comment type="subunit">
    <text evidence="1">PSII is composed of 1 copy each of membrane proteins PsbA, PsbB, PsbC, PsbD, PsbE, PsbF, PsbH, PsbI, PsbJ, PsbK, PsbL, PsbM, PsbT, PsbX, PsbY, PsbZ, Psb30/Ycf12, at least 3 peripheral proteins of the oxygen-evolving complex and a large number of cofactors. It forms dimeric complexes.</text>
</comment>
<comment type="subcellular location">
    <subcellularLocation>
        <location evidence="1">Plastid</location>
        <location evidence="1">Chloroplast thylakoid membrane</location>
        <topology evidence="1">Single-pass membrane protein</topology>
    </subcellularLocation>
</comment>
<comment type="similarity">
    <text evidence="1">Belongs to the PsbJ family.</text>
</comment>